<keyword id="KW-0007">Acetylation</keyword>
<keyword id="KW-0507">mRNA processing</keyword>
<keyword id="KW-0508">mRNA splicing</keyword>
<keyword id="KW-0539">Nucleus</keyword>
<keyword id="KW-1185">Reference proteome</keyword>
<keyword id="KW-0747">Spliceosome</keyword>
<gene>
    <name type="primary">Prpf18</name>
    <name type="synonym">Kcrf</name>
    <name type="synonym">Prp18</name>
</gene>
<accession>Q9JKB8</accession>
<feature type="chain" id="PRO_0000058584" description="Pre-mRNA-splicing factor 18">
    <location>
        <begin position="1"/>
        <end position="342"/>
    </location>
</feature>
<feature type="modified residue" description="N-acetylmethionine" evidence="2">
    <location>
        <position position="1"/>
    </location>
</feature>
<sequence length="342" mass="39866">MDILKSEILRKRQLVEDRNLLVENKKYFKRSELAKKEEEAYFERCGYKVQPKEDDQKPLTSSNPVLELELAEEKLPMTLSRQEVIRRLRERGEPMRLFGETDYDAFQRLRKIEILTPEVNKGLRNDLKAALDKIDQQYLNEIVGGQEPGEEDTQNDLKVHEENTTIEELEALGESLGKGDDHKDMDIITKFLKFLLGVWAKELNSREDYVKRSVQGKLNSATQKQTESYLRPLFRKLRKRNLPADIKESITDIIKFMLQREYVKANDAYLQMAIGNAPWPIGVTMVGIHARTGREKIFSKHVAHVLNDETQRKYIQGLKRLMTICQKHFPTDPSKCVEYNAL</sequence>
<protein>
    <recommendedName>
        <fullName>Pre-mRNA-splicing factor 18</fullName>
    </recommendedName>
    <alternativeName>
        <fullName>PRP18 homolog</fullName>
    </alternativeName>
    <alternativeName>
        <fullName>Potassium channel regulatory factor</fullName>
    </alternativeName>
</protein>
<organism>
    <name type="scientific">Rattus norvegicus</name>
    <name type="common">Rat</name>
    <dbReference type="NCBI Taxonomy" id="10116"/>
    <lineage>
        <taxon>Eukaryota</taxon>
        <taxon>Metazoa</taxon>
        <taxon>Chordata</taxon>
        <taxon>Craniata</taxon>
        <taxon>Vertebrata</taxon>
        <taxon>Euteleostomi</taxon>
        <taxon>Mammalia</taxon>
        <taxon>Eutheria</taxon>
        <taxon>Euarchontoglires</taxon>
        <taxon>Glires</taxon>
        <taxon>Rodentia</taxon>
        <taxon>Myomorpha</taxon>
        <taxon>Muroidea</taxon>
        <taxon>Muridae</taxon>
        <taxon>Murinae</taxon>
        <taxon>Rattus</taxon>
    </lineage>
</organism>
<reference key="1">
    <citation type="journal article" date="2000" name="Biochem. Biophys. Res. Commun.">
        <title>Expression cloning of KCRF, a potassium channel regulatory factor.</title>
        <authorList>
            <person name="Keren-Raifman T."/>
            <person name="Ivanina T."/>
            <person name="Bismuth Y."/>
            <person name="Dascal N."/>
        </authorList>
    </citation>
    <scope>NUCLEOTIDE SEQUENCE [MRNA]</scope>
    <source>
        <tissue>Heart atrium</tissue>
    </source>
</reference>
<evidence type="ECO:0000250" key="1"/>
<evidence type="ECO:0000250" key="2">
    <source>
        <dbReference type="UniProtKB" id="Q99633"/>
    </source>
</evidence>
<evidence type="ECO:0000305" key="3"/>
<comment type="function">
    <text evidence="1">Participates in the second step of pre-mRNA splicing (By similarity). Down-regulates the expression of potassium channel subunits.</text>
</comment>
<comment type="subunit">
    <text evidence="1">Heterodimer with PPIH. Interacts with PRPF4 and with the spliceosome. Part of a complex containing U4/U6 snRNPs (By similarity). Also detected in the cytoplasm.</text>
</comment>
<comment type="subcellular location">
    <subcellularLocation>
        <location evidence="1">Nucleus speckle</location>
    </subcellularLocation>
    <text evidence="1">Colocalizes with spliceosomal snRNPs.</text>
</comment>
<comment type="tissue specificity">
    <text>Detected in brain, heart, liver and skeletal muscle.</text>
</comment>
<comment type="similarity">
    <text evidence="3">Belongs to the PRP18 family.</text>
</comment>
<name>PRP18_RAT</name>
<proteinExistence type="evidence at transcript level"/>
<dbReference type="EMBL" id="AF244920">
    <property type="protein sequence ID" value="AAF44715.1"/>
    <property type="molecule type" value="mRNA"/>
</dbReference>
<dbReference type="PIR" id="JC7358">
    <property type="entry name" value="JC7358"/>
</dbReference>
<dbReference type="RefSeq" id="NP_612532.1">
    <property type="nucleotide sequence ID" value="NM_138523.3"/>
</dbReference>
<dbReference type="RefSeq" id="XP_063132112.1">
    <property type="nucleotide sequence ID" value="XM_063276042.1"/>
</dbReference>
<dbReference type="BMRB" id="Q9JKB8"/>
<dbReference type="SMR" id="Q9JKB8"/>
<dbReference type="FunCoup" id="Q9JKB8">
    <property type="interactions" value="3179"/>
</dbReference>
<dbReference type="STRING" id="10116.ENSRNOP00000074228"/>
<dbReference type="PhosphoSitePlus" id="Q9JKB8"/>
<dbReference type="PaxDb" id="10116-ENSRNOP00000024872"/>
<dbReference type="Ensembl" id="ENSRNOT00000024872.6">
    <property type="protein sequence ID" value="ENSRNOP00000024872.5"/>
    <property type="gene ID" value="ENSRNOG00000018396.7"/>
</dbReference>
<dbReference type="GeneID" id="171552"/>
<dbReference type="KEGG" id="rno:171552"/>
<dbReference type="UCSC" id="RGD:708550">
    <property type="organism name" value="rat"/>
</dbReference>
<dbReference type="AGR" id="RGD:708550"/>
<dbReference type="CTD" id="8559"/>
<dbReference type="RGD" id="708550">
    <property type="gene designation" value="Prpf18"/>
</dbReference>
<dbReference type="eggNOG" id="KOG2808">
    <property type="taxonomic scope" value="Eukaryota"/>
</dbReference>
<dbReference type="GeneTree" id="ENSGT00390000015073"/>
<dbReference type="HOGENOM" id="CLU_039675_0_1_1"/>
<dbReference type="InParanoid" id="Q9JKB8"/>
<dbReference type="PhylomeDB" id="Q9JKB8"/>
<dbReference type="Reactome" id="R-RNO-72163">
    <property type="pathway name" value="mRNA Splicing - Major Pathway"/>
</dbReference>
<dbReference type="PRO" id="PR:Q9JKB8"/>
<dbReference type="Proteomes" id="UP000002494">
    <property type="component" value="Chromosome 17"/>
</dbReference>
<dbReference type="Bgee" id="ENSRNOG00000018396">
    <property type="expression patterns" value="Expressed in Ammon's horn and 20 other cell types or tissues"/>
</dbReference>
<dbReference type="ExpressionAtlas" id="Q9JKB8">
    <property type="expression patterns" value="baseline and differential"/>
</dbReference>
<dbReference type="GO" id="GO:0016607">
    <property type="term" value="C:nuclear speck"/>
    <property type="evidence" value="ECO:0007669"/>
    <property type="project" value="UniProtKB-SubCell"/>
</dbReference>
<dbReference type="GO" id="GO:0071021">
    <property type="term" value="C:U2-type post-spliceosomal complex"/>
    <property type="evidence" value="ECO:0000318"/>
    <property type="project" value="GO_Central"/>
</dbReference>
<dbReference type="GO" id="GO:0046540">
    <property type="term" value="C:U4/U6 x U5 tri-snRNP complex"/>
    <property type="evidence" value="ECO:0000318"/>
    <property type="project" value="GO_Central"/>
</dbReference>
<dbReference type="GO" id="GO:0005682">
    <property type="term" value="C:U5 snRNP"/>
    <property type="evidence" value="ECO:0000318"/>
    <property type="project" value="GO_Central"/>
</dbReference>
<dbReference type="GO" id="GO:0000350">
    <property type="term" value="P:generation of catalytic spliceosome for second transesterification step"/>
    <property type="evidence" value="ECO:0000318"/>
    <property type="project" value="GO_Central"/>
</dbReference>
<dbReference type="GO" id="GO:0051248">
    <property type="term" value="P:negative regulation of protein metabolic process"/>
    <property type="evidence" value="ECO:0000314"/>
    <property type="project" value="RGD"/>
</dbReference>
<dbReference type="FunFam" id="1.20.940.10:FF:000002">
    <property type="entry name" value="Pre-mRNA processing factor 18"/>
    <property type="match status" value="1"/>
</dbReference>
<dbReference type="FunFam" id="4.10.280.110:FF:000001">
    <property type="entry name" value="pre-mRNA-splicing factor 18 isoform X2"/>
    <property type="match status" value="1"/>
</dbReference>
<dbReference type="Gene3D" id="1.20.940.10">
    <property type="entry name" value="Functional domain of the splicing factor Prp18"/>
    <property type="match status" value="1"/>
</dbReference>
<dbReference type="Gene3D" id="4.10.280.110">
    <property type="entry name" value="Pre-mRNA processing factor 4 domain"/>
    <property type="match status" value="1"/>
</dbReference>
<dbReference type="InterPro" id="IPR004098">
    <property type="entry name" value="Prp18"/>
</dbReference>
<dbReference type="InterPro" id="IPR014906">
    <property type="entry name" value="PRP4-like"/>
</dbReference>
<dbReference type="InterPro" id="IPR036285">
    <property type="entry name" value="PRP4-like_sf"/>
</dbReference>
<dbReference type="InterPro" id="IPR039979">
    <property type="entry name" value="PRPF18"/>
</dbReference>
<dbReference type="PANTHER" id="PTHR13007">
    <property type="entry name" value="PRE-MRNA SPLICING FACTOR-RELATED"/>
    <property type="match status" value="1"/>
</dbReference>
<dbReference type="PANTHER" id="PTHR13007:SF19">
    <property type="entry name" value="PRE-MRNA-SPLICING FACTOR 18"/>
    <property type="match status" value="1"/>
</dbReference>
<dbReference type="Pfam" id="PF02840">
    <property type="entry name" value="Prp18"/>
    <property type="match status" value="1"/>
</dbReference>
<dbReference type="Pfam" id="PF08799">
    <property type="entry name" value="PRP4"/>
    <property type="match status" value="1"/>
</dbReference>
<dbReference type="SMART" id="SM00500">
    <property type="entry name" value="SFM"/>
    <property type="match status" value="1"/>
</dbReference>
<dbReference type="SUPFAM" id="SSF47938">
    <property type="entry name" value="Functional domain of the splicing factor Prp18"/>
    <property type="match status" value="1"/>
</dbReference>
<dbReference type="SUPFAM" id="SSF158230">
    <property type="entry name" value="PRP4-like"/>
    <property type="match status" value="1"/>
</dbReference>